<proteinExistence type="evidence at protein level"/>
<organism>
    <name type="scientific">Mus musculus</name>
    <name type="common">Mouse</name>
    <dbReference type="NCBI Taxonomy" id="10090"/>
    <lineage>
        <taxon>Eukaryota</taxon>
        <taxon>Metazoa</taxon>
        <taxon>Chordata</taxon>
        <taxon>Craniata</taxon>
        <taxon>Vertebrata</taxon>
        <taxon>Euteleostomi</taxon>
        <taxon>Mammalia</taxon>
        <taxon>Eutheria</taxon>
        <taxon>Euarchontoglires</taxon>
        <taxon>Glires</taxon>
        <taxon>Rodentia</taxon>
        <taxon>Myomorpha</taxon>
        <taxon>Muroidea</taxon>
        <taxon>Muridae</taxon>
        <taxon>Murinae</taxon>
        <taxon>Mus</taxon>
        <taxon>Mus</taxon>
    </lineage>
</organism>
<keyword id="KW-0175">Coiled coil</keyword>
<keyword id="KW-0963">Cytoplasm</keyword>
<keyword id="KW-0597">Phosphoprotein</keyword>
<keyword id="KW-1185">Reference proteome</keyword>
<keyword id="KW-0677">Repeat</keyword>
<keyword id="KW-0678">Repressor</keyword>
<keyword id="KW-0804">Transcription</keyword>
<keyword id="KW-0805">Transcription regulation</keyword>
<name>WWC2_MOUSE</name>
<protein>
    <recommendedName>
        <fullName>Protein WWC2</fullName>
    </recommendedName>
    <alternativeName>
        <fullName>WW domain-containing protein 2</fullName>
    </alternativeName>
</protein>
<sequence>MPRRAGSGQLPLPRGWEEARDYDGKVFYIDHNTRRTSWIDPRDRLTKPLSFADCVGDELPWGWEAGFDPQIGAYYIDHINKTTQIEDPRKQWRGEQEKMLKDYLSVAQDALRTQKELYHVKEQRLALALDEYVRLNDAYKEKSSSHTSLFSGSSSSTKYDPDILKAEISTTQLRVKKLKRELSHMKQELLYKQQGFETLQQIDEKMSGGQSGYELNEAKAILTELKSIRKAISSGEKEKQDLMQSLAKLQERFHLDQNMGSSEPDLRSSPVNSHLSLSRQTLDAGSQTSISGDIGVRSRSNLAEKVRLSLQYEEAKRSMANLKIELSKLDGEAWPGALDIEKEKLMLINEKEELLKELQFITPQKRSQEELERLEAERQHLEEELMAARGSPSRALTERLKLEEKRKELLQKLEETTKLTTSLYSQLQSLSSSTLSMSSGSSLGSLASSRGSLNTSSRGSLNSLSSSELYYSSQGDQMDTDYQYKLDFLLQEKGGYIPSGPITTIHENEVVKSPSQPGQSGLCGVGVTASSHTTPLTEASKSVASLSSRSSLSSLSPPGSPLVLDSVFPGSSHDTSPHQFPTDFEDCELSRRFADVGLGENQALLDSDSGGASQPLLEDKGLSDCPGELLCEGATDVEKSLPKRRGLHLRGDKTTRVSAAASDESVAGDSGVYEASMKQPGEMEDVPYSEEDVTIVETAQVQIGLRYDTKSSSFMVIIAQLRNLHAFSIPHSSKVYFRVALLPSSADVSCLFRTKVHPPTESVLYNDVFRVAVSQAALQQKTLRVDLCSASKHRREECLAGTQISLADLPFSNEIFMLWYNLLPSKQMPCKKNEDGNEEPGARSQQPMLDPIDLDAVSALLARTSAELLAVEQELAQEEEEEELRPERRGPGRDCLTMLREASDEPAALRESGVPLAEGSRCTEDPKPCPRGPETSQCRKEPAEDPGQLPSGLPTLVDKETNTDEVVDSNMAVRPKDRSSLSSRQHPFVRNSVIVRSQTFSPGERSQYICRLNRSDSDSSTLAKKSLFVRNSTERRSLRVKRAVCQPTLRRTAQECPVRTSLDLELDLQASLTRQSRLNDELQALRGLRQKLEELKAQGETDLPPGVLEDERFQKLLKQAEKQAEQTKEEQKQDLNAERLMRQVSKDVCRLREQSQKEPRQVQSFREKIAYFTRAKISIPSLPADDV</sequence>
<reference key="1">
    <citation type="submission" date="2000-06" db="EMBL/GenBank/DDBJ databases">
        <title>Isolation of full-length cDNA clones from mouse brain cDNA library made by oligo-capping method.</title>
        <authorList>
            <person name="Osada N."/>
            <person name="Kusuda J."/>
            <person name="Tanuma R."/>
            <person name="Ito A."/>
            <person name="Hirata M."/>
            <person name="Sugano S."/>
            <person name="Hashimoto K."/>
        </authorList>
    </citation>
    <scope>NUCLEOTIDE SEQUENCE [LARGE SCALE MRNA]</scope>
    <source>
        <strain>C57BL/6J</strain>
        <tissue>Brain</tissue>
    </source>
</reference>
<reference key="2">
    <citation type="journal article" date="2005" name="Science">
        <title>The transcriptional landscape of the mammalian genome.</title>
        <authorList>
            <person name="Carninci P."/>
            <person name="Kasukawa T."/>
            <person name="Katayama S."/>
            <person name="Gough J."/>
            <person name="Frith M.C."/>
            <person name="Maeda N."/>
            <person name="Oyama R."/>
            <person name="Ravasi T."/>
            <person name="Lenhard B."/>
            <person name="Wells C."/>
            <person name="Kodzius R."/>
            <person name="Shimokawa K."/>
            <person name="Bajic V.B."/>
            <person name="Brenner S.E."/>
            <person name="Batalov S."/>
            <person name="Forrest A.R."/>
            <person name="Zavolan M."/>
            <person name="Davis M.J."/>
            <person name="Wilming L.G."/>
            <person name="Aidinis V."/>
            <person name="Allen J.E."/>
            <person name="Ambesi-Impiombato A."/>
            <person name="Apweiler R."/>
            <person name="Aturaliya R.N."/>
            <person name="Bailey T.L."/>
            <person name="Bansal M."/>
            <person name="Baxter L."/>
            <person name="Beisel K.W."/>
            <person name="Bersano T."/>
            <person name="Bono H."/>
            <person name="Chalk A.M."/>
            <person name="Chiu K.P."/>
            <person name="Choudhary V."/>
            <person name="Christoffels A."/>
            <person name="Clutterbuck D.R."/>
            <person name="Crowe M.L."/>
            <person name="Dalla E."/>
            <person name="Dalrymple B.P."/>
            <person name="de Bono B."/>
            <person name="Della Gatta G."/>
            <person name="di Bernardo D."/>
            <person name="Down T."/>
            <person name="Engstrom P."/>
            <person name="Fagiolini M."/>
            <person name="Faulkner G."/>
            <person name="Fletcher C.F."/>
            <person name="Fukushima T."/>
            <person name="Furuno M."/>
            <person name="Futaki S."/>
            <person name="Gariboldi M."/>
            <person name="Georgii-Hemming P."/>
            <person name="Gingeras T.R."/>
            <person name="Gojobori T."/>
            <person name="Green R.E."/>
            <person name="Gustincich S."/>
            <person name="Harbers M."/>
            <person name="Hayashi Y."/>
            <person name="Hensch T.K."/>
            <person name="Hirokawa N."/>
            <person name="Hill D."/>
            <person name="Huminiecki L."/>
            <person name="Iacono M."/>
            <person name="Ikeo K."/>
            <person name="Iwama A."/>
            <person name="Ishikawa T."/>
            <person name="Jakt M."/>
            <person name="Kanapin A."/>
            <person name="Katoh M."/>
            <person name="Kawasawa Y."/>
            <person name="Kelso J."/>
            <person name="Kitamura H."/>
            <person name="Kitano H."/>
            <person name="Kollias G."/>
            <person name="Krishnan S.P."/>
            <person name="Kruger A."/>
            <person name="Kummerfeld S.K."/>
            <person name="Kurochkin I.V."/>
            <person name="Lareau L.F."/>
            <person name="Lazarevic D."/>
            <person name="Lipovich L."/>
            <person name="Liu J."/>
            <person name="Liuni S."/>
            <person name="McWilliam S."/>
            <person name="Madan Babu M."/>
            <person name="Madera M."/>
            <person name="Marchionni L."/>
            <person name="Matsuda H."/>
            <person name="Matsuzawa S."/>
            <person name="Miki H."/>
            <person name="Mignone F."/>
            <person name="Miyake S."/>
            <person name="Morris K."/>
            <person name="Mottagui-Tabar S."/>
            <person name="Mulder N."/>
            <person name="Nakano N."/>
            <person name="Nakauchi H."/>
            <person name="Ng P."/>
            <person name="Nilsson R."/>
            <person name="Nishiguchi S."/>
            <person name="Nishikawa S."/>
            <person name="Nori F."/>
            <person name="Ohara O."/>
            <person name="Okazaki Y."/>
            <person name="Orlando V."/>
            <person name="Pang K.C."/>
            <person name="Pavan W.J."/>
            <person name="Pavesi G."/>
            <person name="Pesole G."/>
            <person name="Petrovsky N."/>
            <person name="Piazza S."/>
            <person name="Reed J."/>
            <person name="Reid J.F."/>
            <person name="Ring B.Z."/>
            <person name="Ringwald M."/>
            <person name="Rost B."/>
            <person name="Ruan Y."/>
            <person name="Salzberg S.L."/>
            <person name="Sandelin A."/>
            <person name="Schneider C."/>
            <person name="Schoenbach C."/>
            <person name="Sekiguchi K."/>
            <person name="Semple C.A."/>
            <person name="Seno S."/>
            <person name="Sessa L."/>
            <person name="Sheng Y."/>
            <person name="Shibata Y."/>
            <person name="Shimada H."/>
            <person name="Shimada K."/>
            <person name="Silva D."/>
            <person name="Sinclair B."/>
            <person name="Sperling S."/>
            <person name="Stupka E."/>
            <person name="Sugiura K."/>
            <person name="Sultana R."/>
            <person name="Takenaka Y."/>
            <person name="Taki K."/>
            <person name="Tammoja K."/>
            <person name="Tan S.L."/>
            <person name="Tang S."/>
            <person name="Taylor M.S."/>
            <person name="Tegner J."/>
            <person name="Teichmann S.A."/>
            <person name="Ueda H.R."/>
            <person name="van Nimwegen E."/>
            <person name="Verardo R."/>
            <person name="Wei C.L."/>
            <person name="Yagi K."/>
            <person name="Yamanishi H."/>
            <person name="Zabarovsky E."/>
            <person name="Zhu S."/>
            <person name="Zimmer A."/>
            <person name="Hide W."/>
            <person name="Bult C."/>
            <person name="Grimmond S.M."/>
            <person name="Teasdale R.D."/>
            <person name="Liu E.T."/>
            <person name="Brusic V."/>
            <person name="Quackenbush J."/>
            <person name="Wahlestedt C."/>
            <person name="Mattick J.S."/>
            <person name="Hume D.A."/>
            <person name="Kai C."/>
            <person name="Sasaki D."/>
            <person name="Tomaru Y."/>
            <person name="Fukuda S."/>
            <person name="Kanamori-Katayama M."/>
            <person name="Suzuki M."/>
            <person name="Aoki J."/>
            <person name="Arakawa T."/>
            <person name="Iida J."/>
            <person name="Imamura K."/>
            <person name="Itoh M."/>
            <person name="Kato T."/>
            <person name="Kawaji H."/>
            <person name="Kawagashira N."/>
            <person name="Kawashima T."/>
            <person name="Kojima M."/>
            <person name="Kondo S."/>
            <person name="Konno H."/>
            <person name="Nakano K."/>
            <person name="Ninomiya N."/>
            <person name="Nishio T."/>
            <person name="Okada M."/>
            <person name="Plessy C."/>
            <person name="Shibata K."/>
            <person name="Shiraki T."/>
            <person name="Suzuki S."/>
            <person name="Tagami M."/>
            <person name="Waki K."/>
            <person name="Watahiki A."/>
            <person name="Okamura-Oho Y."/>
            <person name="Suzuki H."/>
            <person name="Kawai J."/>
            <person name="Hayashizaki Y."/>
        </authorList>
    </citation>
    <scope>NUCLEOTIDE SEQUENCE [LARGE SCALE MRNA]</scope>
    <source>
        <strain>C57BL/6J</strain>
        <tissue>Placenta</tissue>
        <tissue>Skin</tissue>
    </source>
</reference>
<reference key="3">
    <citation type="journal article" date="2004" name="Genome Res.">
        <title>The status, quality, and expansion of the NIH full-length cDNA project: the Mammalian Gene Collection (MGC).</title>
        <authorList>
            <consortium name="The MGC Project Team"/>
        </authorList>
    </citation>
    <scope>NUCLEOTIDE SEQUENCE [LARGE SCALE MRNA]</scope>
    <source>
        <strain>C57BL/6J</strain>
        <strain>FVB/N-3</strain>
        <tissue>Brain</tissue>
        <tissue>Mammary tumor</tissue>
    </source>
</reference>
<reference key="4">
    <citation type="journal article" date="2007" name="Proc. Natl. Acad. Sci. U.S.A.">
        <title>Large-scale phosphorylation analysis of mouse liver.</title>
        <authorList>
            <person name="Villen J."/>
            <person name="Beausoleil S.A."/>
            <person name="Gerber S.A."/>
            <person name="Gygi S.P."/>
        </authorList>
    </citation>
    <scope>PHOSPHORYLATION [LARGE SCALE ANALYSIS] AT THR-999</scope>
    <scope>IDENTIFICATION BY MASS SPECTROMETRY [LARGE SCALE ANALYSIS]</scope>
    <source>
        <tissue>Liver</tissue>
    </source>
</reference>
<reference key="5">
    <citation type="journal article" date="2010" name="Cell">
        <title>A tissue-specific atlas of mouse protein phosphorylation and expression.</title>
        <authorList>
            <person name="Huttlin E.L."/>
            <person name="Jedrychowski M.P."/>
            <person name="Elias J.E."/>
            <person name="Goswami T."/>
            <person name="Rad R."/>
            <person name="Beausoleil S.A."/>
            <person name="Villen J."/>
            <person name="Haas W."/>
            <person name="Sowa M.E."/>
            <person name="Gygi S.P."/>
        </authorList>
    </citation>
    <scope>PHOSPHORYLATION [LARGE SCALE ANALYSIS] AT SER-286 AND SER-1017</scope>
    <scope>IDENTIFICATION BY MASS SPECTROMETRY [LARGE SCALE ANALYSIS]</scope>
    <source>
        <tissue>Brown adipose tissue</tissue>
        <tissue>Kidney</tissue>
        <tissue>Lung</tissue>
        <tissue>Testis</tissue>
    </source>
</reference>
<comment type="function">
    <text evidence="1">Regulator of the Hippo signaling pathway, also known as the Salvador-Warts-Hippo (SWH) pathway. Enhances phosphorylation of LATS1 and YAP1 and negatively regulates cell proliferation and organ growth due to a suppression of the transcriptional activity of YAP1, the major effector of the Hippo pathway.</text>
</comment>
<comment type="subunit">
    <text evidence="1">Forms homodimers and heterodimers with WWC1 and WWC3. Interacts with DLC1 and PRKCZ. Interacts (via WW domains) with LATS1 and LATS2.</text>
</comment>
<comment type="subcellular location">
    <subcellularLocation>
        <location evidence="1">Cytoplasm</location>
        <location evidence="1">Cytosol</location>
    </subcellularLocation>
</comment>
<comment type="similarity">
    <text evidence="6">Belongs to the WWC family.</text>
</comment>
<comment type="sequence caution" evidence="6">
    <conflict type="frameshift">
        <sequence resource="EMBL-CDS" id="BAA97983"/>
    </conflict>
</comment>
<comment type="sequence caution" evidence="6">
    <conflict type="erroneous initiation">
        <sequence resource="EMBL-CDS" id="BAE28244"/>
    </conflict>
    <text>Truncated N-terminus.</text>
</comment>
<accession>Q6NXJ0</accession>
<accession>Q3UGG4</accession>
<accession>Q3UH10</accession>
<accession>Q7TMY1</accession>
<accession>Q8CE61</accession>
<accession>Q9JJ63</accession>
<evidence type="ECO:0000250" key="1">
    <source>
        <dbReference type="UniProtKB" id="Q6AWC2"/>
    </source>
</evidence>
<evidence type="ECO:0000255" key="2"/>
<evidence type="ECO:0000255" key="3">
    <source>
        <dbReference type="PROSITE-ProRule" id="PRU00041"/>
    </source>
</evidence>
<evidence type="ECO:0000255" key="4">
    <source>
        <dbReference type="PROSITE-ProRule" id="PRU00224"/>
    </source>
</evidence>
<evidence type="ECO:0000256" key="5">
    <source>
        <dbReference type="SAM" id="MobiDB-lite"/>
    </source>
</evidence>
<evidence type="ECO:0000305" key="6"/>
<evidence type="ECO:0007744" key="7">
    <source>
    </source>
</evidence>
<evidence type="ECO:0007744" key="8">
    <source>
    </source>
</evidence>
<dbReference type="EMBL" id="AB045323">
    <property type="protein sequence ID" value="BAA97983.1"/>
    <property type="status" value="ALT_FRAME"/>
    <property type="molecule type" value="mRNA"/>
</dbReference>
<dbReference type="EMBL" id="AK028956">
    <property type="protein sequence ID" value="BAC26212.1"/>
    <property type="molecule type" value="mRNA"/>
</dbReference>
<dbReference type="EMBL" id="AK147648">
    <property type="protein sequence ID" value="BAE28047.1"/>
    <property type="molecule type" value="mRNA"/>
</dbReference>
<dbReference type="EMBL" id="AK147944">
    <property type="protein sequence ID" value="BAE28244.1"/>
    <property type="status" value="ALT_INIT"/>
    <property type="molecule type" value="mRNA"/>
</dbReference>
<dbReference type="EMBL" id="BC054434">
    <property type="protein sequence ID" value="AAH54434.1"/>
    <property type="molecule type" value="mRNA"/>
</dbReference>
<dbReference type="EMBL" id="BC067050">
    <property type="protein sequence ID" value="AAH67050.1"/>
    <property type="molecule type" value="mRNA"/>
</dbReference>
<dbReference type="CCDS" id="CCDS22301.1"/>
<dbReference type="RefSeq" id="NP_598552.2">
    <property type="nucleotide sequence ID" value="NM_133791.4"/>
</dbReference>
<dbReference type="SMR" id="Q6NXJ0"/>
<dbReference type="BioGRID" id="206537">
    <property type="interactions" value="2"/>
</dbReference>
<dbReference type="FunCoup" id="Q6NXJ0">
    <property type="interactions" value="1505"/>
</dbReference>
<dbReference type="IntAct" id="Q6NXJ0">
    <property type="interactions" value="1"/>
</dbReference>
<dbReference type="STRING" id="10090.ENSMUSP00000056121"/>
<dbReference type="GlyGen" id="Q6NXJ0">
    <property type="glycosylation" value="5 sites, 2 N-linked glycans (2 sites), 1 O-linked glycan (3 sites)"/>
</dbReference>
<dbReference type="iPTMnet" id="Q6NXJ0"/>
<dbReference type="PhosphoSitePlus" id="Q6NXJ0"/>
<dbReference type="SwissPalm" id="Q6NXJ0"/>
<dbReference type="jPOST" id="Q6NXJ0"/>
<dbReference type="PaxDb" id="10090-ENSMUSP00000056121"/>
<dbReference type="PeptideAtlas" id="Q6NXJ0"/>
<dbReference type="ProteomicsDB" id="275221"/>
<dbReference type="Pumba" id="Q6NXJ0"/>
<dbReference type="Antibodypedia" id="51479">
    <property type="antibodies" value="57 antibodies from 18 providers"/>
</dbReference>
<dbReference type="Ensembl" id="ENSMUST00000057561.9">
    <property type="protein sequence ID" value="ENSMUSP00000056121.8"/>
    <property type="gene ID" value="ENSMUSG00000031563.9"/>
</dbReference>
<dbReference type="GeneID" id="52357"/>
<dbReference type="KEGG" id="mmu:52357"/>
<dbReference type="UCSC" id="uc009lrm.2">
    <property type="organism name" value="mouse"/>
</dbReference>
<dbReference type="AGR" id="MGI:1261872"/>
<dbReference type="CTD" id="80014"/>
<dbReference type="MGI" id="MGI:1261872">
    <property type="gene designation" value="Wwc2"/>
</dbReference>
<dbReference type="VEuPathDB" id="HostDB:ENSMUSG00000031563"/>
<dbReference type="eggNOG" id="KOG3209">
    <property type="taxonomic scope" value="Eukaryota"/>
</dbReference>
<dbReference type="GeneTree" id="ENSGT00410000025556"/>
<dbReference type="HOGENOM" id="CLU_005420_0_0_1"/>
<dbReference type="InParanoid" id="Q6NXJ0"/>
<dbReference type="OMA" id="FHLDQNM"/>
<dbReference type="OrthoDB" id="2020426at2759"/>
<dbReference type="PhylomeDB" id="Q6NXJ0"/>
<dbReference type="TreeFam" id="TF324040"/>
<dbReference type="BioGRID-ORCS" id="52357">
    <property type="hits" value="4 hits in 78 CRISPR screens"/>
</dbReference>
<dbReference type="ChiTaRS" id="Wwc2">
    <property type="organism name" value="mouse"/>
</dbReference>
<dbReference type="PRO" id="PR:Q6NXJ0"/>
<dbReference type="Proteomes" id="UP000000589">
    <property type="component" value="Chromosome 8"/>
</dbReference>
<dbReference type="RNAct" id="Q6NXJ0">
    <property type="molecule type" value="protein"/>
</dbReference>
<dbReference type="Bgee" id="ENSMUSG00000031563">
    <property type="expression patterns" value="Expressed in primary oocyte and 256 other cell types or tissues"/>
</dbReference>
<dbReference type="GO" id="GO:0005829">
    <property type="term" value="C:cytosol"/>
    <property type="evidence" value="ECO:0007669"/>
    <property type="project" value="UniProtKB-SubCell"/>
</dbReference>
<dbReference type="GO" id="GO:0019900">
    <property type="term" value="F:kinase binding"/>
    <property type="evidence" value="ECO:0007669"/>
    <property type="project" value="Ensembl"/>
</dbReference>
<dbReference type="GO" id="GO:0035591">
    <property type="term" value="F:signaling adaptor activity"/>
    <property type="evidence" value="ECO:0007669"/>
    <property type="project" value="Ensembl"/>
</dbReference>
<dbReference type="GO" id="GO:0035329">
    <property type="term" value="P:hippo signaling"/>
    <property type="evidence" value="ECO:0007669"/>
    <property type="project" value="Ensembl"/>
</dbReference>
<dbReference type="GO" id="GO:0008285">
    <property type="term" value="P:negative regulation of cell population proliferation"/>
    <property type="evidence" value="ECO:0000250"/>
    <property type="project" value="UniProtKB"/>
</dbReference>
<dbReference type="GO" id="GO:0035331">
    <property type="term" value="P:negative regulation of hippo signaling"/>
    <property type="evidence" value="ECO:0007669"/>
    <property type="project" value="Ensembl"/>
</dbReference>
<dbReference type="GO" id="GO:0046621">
    <property type="term" value="P:negative regulation of organ growth"/>
    <property type="evidence" value="ECO:0007669"/>
    <property type="project" value="Ensembl"/>
</dbReference>
<dbReference type="GO" id="GO:0000122">
    <property type="term" value="P:negative regulation of transcription by RNA polymerase II"/>
    <property type="evidence" value="ECO:0007669"/>
    <property type="project" value="Ensembl"/>
</dbReference>
<dbReference type="CDD" id="cd08680">
    <property type="entry name" value="C2_Kibra"/>
    <property type="match status" value="1"/>
</dbReference>
<dbReference type="CDD" id="cd00201">
    <property type="entry name" value="WW"/>
    <property type="match status" value="2"/>
</dbReference>
<dbReference type="FunFam" id="2.20.70.10:FF:000001">
    <property type="entry name" value="Membrane-associated guanylate kinase, WW and PDZ domain-containing protein 1"/>
    <property type="match status" value="1"/>
</dbReference>
<dbReference type="FunFam" id="2.60.40.150:FF:000084">
    <property type="entry name" value="Protein KIBRA isoform 1"/>
    <property type="match status" value="1"/>
</dbReference>
<dbReference type="FunFam" id="2.20.70.10:FF:000041">
    <property type="entry name" value="WW and C2 domain containing 1"/>
    <property type="match status" value="1"/>
</dbReference>
<dbReference type="Gene3D" id="2.20.70.10">
    <property type="match status" value="2"/>
</dbReference>
<dbReference type="Gene3D" id="2.60.40.150">
    <property type="entry name" value="C2 domain"/>
    <property type="match status" value="1"/>
</dbReference>
<dbReference type="InterPro" id="IPR000008">
    <property type="entry name" value="C2_dom"/>
</dbReference>
<dbReference type="InterPro" id="IPR035892">
    <property type="entry name" value="C2_domain_sf"/>
</dbReference>
<dbReference type="InterPro" id="IPR037771">
    <property type="entry name" value="C2_WWC"/>
</dbReference>
<dbReference type="InterPro" id="IPR001202">
    <property type="entry name" value="WW_dom"/>
</dbReference>
<dbReference type="InterPro" id="IPR036020">
    <property type="entry name" value="WW_dom_sf"/>
</dbReference>
<dbReference type="InterPro" id="IPR051105">
    <property type="entry name" value="WWC/KIBRA_Hippo_Reg"/>
</dbReference>
<dbReference type="PANTHER" id="PTHR14791">
    <property type="entry name" value="BOMB/KIRA PROTEINS"/>
    <property type="match status" value="1"/>
</dbReference>
<dbReference type="PANTHER" id="PTHR14791:SF26">
    <property type="entry name" value="PROTEIN WWC2"/>
    <property type="match status" value="1"/>
</dbReference>
<dbReference type="Pfam" id="PF00397">
    <property type="entry name" value="WW"/>
    <property type="match status" value="2"/>
</dbReference>
<dbReference type="SMART" id="SM00456">
    <property type="entry name" value="WW"/>
    <property type="match status" value="2"/>
</dbReference>
<dbReference type="SUPFAM" id="SSF49562">
    <property type="entry name" value="C2 domain (Calcium/lipid-binding domain, CaLB)"/>
    <property type="match status" value="1"/>
</dbReference>
<dbReference type="SUPFAM" id="SSF51045">
    <property type="entry name" value="WW domain"/>
    <property type="match status" value="2"/>
</dbReference>
<dbReference type="PROSITE" id="PS50004">
    <property type="entry name" value="C2"/>
    <property type="match status" value="1"/>
</dbReference>
<dbReference type="PROSITE" id="PS01159">
    <property type="entry name" value="WW_DOMAIN_1"/>
    <property type="match status" value="1"/>
</dbReference>
<dbReference type="PROSITE" id="PS50020">
    <property type="entry name" value="WW_DOMAIN_2"/>
    <property type="match status" value="2"/>
</dbReference>
<gene>
    <name type="primary">Wwc2</name>
    <name type="synonym">D8Ertd594e</name>
    <name type="ORF">MNCb-4173</name>
</gene>
<feature type="chain" id="PRO_0000309491" description="Protein WWC2">
    <location>
        <begin position="1"/>
        <end position="1187"/>
    </location>
</feature>
<feature type="domain" description="WW 1" evidence="4">
    <location>
        <begin position="10"/>
        <end position="43"/>
    </location>
</feature>
<feature type="domain" description="WW 2" evidence="4">
    <location>
        <begin position="57"/>
        <end position="90"/>
    </location>
</feature>
<feature type="domain" description="C2" evidence="3">
    <location>
        <begin position="697"/>
        <end position="820"/>
    </location>
</feature>
<feature type="region of interest" description="Disordered" evidence="5">
    <location>
        <begin position="438"/>
        <end position="464"/>
    </location>
</feature>
<feature type="region of interest" description="Disordered" evidence="5">
    <location>
        <begin position="830"/>
        <end position="849"/>
    </location>
</feature>
<feature type="region of interest" description="Disordered" evidence="5">
    <location>
        <begin position="874"/>
        <end position="963"/>
    </location>
</feature>
<feature type="region of interest" description="Interaction with PRKCZ" evidence="1">
    <location>
        <begin position="1026"/>
        <end position="1045"/>
    </location>
</feature>
<feature type="coiled-coil region" evidence="2">
    <location>
        <begin position="121"/>
        <end position="194"/>
    </location>
</feature>
<feature type="coiled-coil region" evidence="2">
    <location>
        <begin position="224"/>
        <end position="256"/>
    </location>
</feature>
<feature type="coiled-coil region" evidence="2">
    <location>
        <begin position="302"/>
        <end position="423"/>
    </location>
</feature>
<feature type="coiled-coil region" evidence="2">
    <location>
        <begin position="859"/>
        <end position="885"/>
    </location>
</feature>
<feature type="coiled-coil region" evidence="2">
    <location>
        <begin position="1063"/>
        <end position="1143"/>
    </location>
</feature>
<feature type="compositionally biased region" description="Acidic residues" evidence="5">
    <location>
        <begin position="875"/>
        <end position="884"/>
    </location>
</feature>
<feature type="modified residue" description="Phosphoserine" evidence="8">
    <location>
        <position position="286"/>
    </location>
</feature>
<feature type="modified residue" description="Phosphothreonine" evidence="7">
    <location>
        <position position="999"/>
    </location>
</feature>
<feature type="modified residue" description="Phosphoserine" evidence="8">
    <location>
        <position position="1017"/>
    </location>
</feature>
<feature type="sequence conflict" description="In Ref. 2; BAE28244." evidence="6" ref="2">
    <original>E</original>
    <variation>G</variation>
    <location>
        <position position="352"/>
    </location>
</feature>
<feature type="sequence conflict" description="In Ref. 2; BAE28047." evidence="6" ref="2">
    <original>I</original>
    <variation>V</variation>
    <location>
        <position position="361"/>
    </location>
</feature>
<feature type="sequence conflict" description="In Ref. 1; BAA97983." evidence="6" ref="1">
    <original>S</original>
    <variation>F</variation>
    <location>
        <position position="572"/>
    </location>
</feature>
<feature type="sequence conflict" description="In Ref. 1; BAA97983." evidence="6" ref="1">
    <original>SP</original>
    <variation>FS</variation>
    <location>
        <begin position="576"/>
        <end position="577"/>
    </location>
</feature>
<feature type="sequence conflict" description="In Ref. 1; BAA97983." evidence="6" ref="1">
    <original>M</original>
    <variation>V</variation>
    <location>
        <position position="683"/>
    </location>
</feature>
<feature type="sequence conflict" description="In Ref. 2; BAE28047." evidence="6" ref="2">
    <original>A</original>
    <variation>T</variation>
    <location>
        <position position="699"/>
    </location>
</feature>
<feature type="sequence conflict" description="In Ref. 1; BAA97983." evidence="6" ref="1">
    <original>V</original>
    <variation>A</variation>
    <location>
        <position position="773"/>
    </location>
</feature>
<feature type="sequence conflict" description="In Ref. 1; BAA97983." evidence="6" ref="1">
    <original>T</original>
    <variation>I</variation>
    <location>
        <position position="864"/>
    </location>
</feature>
<feature type="sequence conflict" description="In Ref. 1; BAA97983." evidence="6" ref="1">
    <original>R</original>
    <variation>I</variation>
    <location>
        <position position="1174"/>
    </location>
</feature>